<organism>
    <name type="scientific">Conus ventricosus</name>
    <name type="common">Mediterranean cone</name>
    <dbReference type="NCBI Taxonomy" id="117992"/>
    <lineage>
        <taxon>Eukaryota</taxon>
        <taxon>Metazoa</taxon>
        <taxon>Spiralia</taxon>
        <taxon>Lophotrochozoa</taxon>
        <taxon>Mollusca</taxon>
        <taxon>Gastropoda</taxon>
        <taxon>Caenogastropoda</taxon>
        <taxon>Neogastropoda</taxon>
        <taxon>Conoidea</taxon>
        <taxon>Conidae</taxon>
        <taxon>Conus</taxon>
        <taxon>Lautoconus</taxon>
    </lineage>
</organism>
<reference key="1">
    <citation type="journal article" date="2001" name="Mol. Biol. Evol.">
        <title>Mechanisms for evolving hypervariability: the case of conopeptides.</title>
        <authorList>
            <person name="Conticello S.G."/>
            <person name="Gilad Y."/>
            <person name="Avidan N."/>
            <person name="Ben-Asher E."/>
            <person name="Levy Z."/>
            <person name="Fainzilber M."/>
        </authorList>
    </citation>
    <scope>NUCLEOTIDE SEQUENCE [MRNA]</scope>
    <source>
        <tissue>Venom duct</tissue>
    </source>
</reference>
<accession>Q9BPA4</accession>
<protein>
    <recommendedName>
        <fullName>Conotoxin VnMKLT1-01122</fullName>
    </recommendedName>
</protein>
<keyword id="KW-0165">Cleavage on pair of basic residues</keyword>
<keyword id="KW-1015">Disulfide bond</keyword>
<keyword id="KW-0960">Knottin</keyword>
<keyword id="KW-0528">Neurotoxin</keyword>
<keyword id="KW-0873">Pyrrolidone carboxylic acid</keyword>
<keyword id="KW-0964">Secreted</keyword>
<keyword id="KW-0732">Signal</keyword>
<keyword id="KW-0800">Toxin</keyword>
<feature type="signal peptide" evidence="2">
    <location>
        <begin position="1"/>
        <end position="22"/>
    </location>
</feature>
<feature type="propeptide" id="PRO_0000404784" evidence="1">
    <location>
        <begin position="23"/>
        <end position="48"/>
    </location>
</feature>
<feature type="peptide" id="PRO_0000404785" description="Conotoxin VnMKLT1-01122">
    <location>
        <begin position="51"/>
        <end position="79"/>
    </location>
</feature>
<feature type="modified residue" description="Pyrrolidone carboxylic acid" evidence="1">
    <location>
        <position position="51"/>
    </location>
</feature>
<feature type="disulfide bond" evidence="1">
    <location>
        <begin position="53"/>
        <end position="70"/>
    </location>
</feature>
<feature type="disulfide bond" evidence="1">
    <location>
        <begin position="60"/>
        <end position="74"/>
    </location>
</feature>
<feature type="disulfide bond" evidence="1">
    <location>
        <begin position="69"/>
        <end position="78"/>
    </location>
</feature>
<dbReference type="EMBL" id="AF215033">
    <property type="protein sequence ID" value="AAG60461.1"/>
    <property type="molecule type" value="mRNA"/>
</dbReference>
<dbReference type="SMR" id="Q9BPA4"/>
<dbReference type="ConoServer" id="720">
    <property type="toxin name" value="Vn6.9 precursor"/>
</dbReference>
<dbReference type="GO" id="GO:0005576">
    <property type="term" value="C:extracellular region"/>
    <property type="evidence" value="ECO:0007669"/>
    <property type="project" value="UniProtKB-SubCell"/>
</dbReference>
<dbReference type="GO" id="GO:0008200">
    <property type="term" value="F:ion channel inhibitor activity"/>
    <property type="evidence" value="ECO:0007669"/>
    <property type="project" value="InterPro"/>
</dbReference>
<dbReference type="GO" id="GO:0090729">
    <property type="term" value="F:toxin activity"/>
    <property type="evidence" value="ECO:0007669"/>
    <property type="project" value="UniProtKB-KW"/>
</dbReference>
<dbReference type="InterPro" id="IPR004214">
    <property type="entry name" value="Conotoxin"/>
</dbReference>
<dbReference type="Pfam" id="PF02950">
    <property type="entry name" value="Conotoxin"/>
    <property type="match status" value="1"/>
</dbReference>
<sequence>MKLTCMKIVAVLFLTAWTFVTADDSRNGLEYLFPKAHYEMNPEASKLNKKQDCAAGGQFCGFPKIGGPCCSGWCLGVCA</sequence>
<evidence type="ECO:0000250" key="1"/>
<evidence type="ECO:0000255" key="2"/>
<evidence type="ECO:0000305" key="3"/>
<name>O169_CONVE</name>
<proteinExistence type="evidence at transcript level"/>
<comment type="subcellular location">
    <subcellularLocation>
        <location evidence="1">Secreted</location>
    </subcellularLocation>
</comment>
<comment type="tissue specificity">
    <text>Expressed by the venom duct.</text>
</comment>
<comment type="domain">
    <text evidence="1">The presence of a 'disulfide through disulfide knot' structurally defines this protein as a knottin.</text>
</comment>
<comment type="domain">
    <text>The cysteine framework is VI/VII (C-C-CC-C-C).</text>
</comment>
<comment type="similarity">
    <text evidence="3">Belongs to the conotoxin O1 superfamily.</text>
</comment>